<proteinExistence type="inferred from homology"/>
<keyword id="KW-0489">Methyltransferase</keyword>
<keyword id="KW-0949">S-adenosyl-L-methionine</keyword>
<keyword id="KW-0808">Transferase</keyword>
<keyword id="KW-0819">tRNA processing</keyword>
<feature type="chain" id="PRO_0000288118" description="tRNA (guanine-N(7)-)-methyltransferase">
    <location>
        <begin position="1"/>
        <end position="301"/>
    </location>
</feature>
<feature type="region of interest" description="Disordered" evidence="3">
    <location>
        <begin position="1"/>
        <end position="26"/>
    </location>
</feature>
<feature type="region of interest" description="Disordered" evidence="3">
    <location>
        <begin position="244"/>
        <end position="270"/>
    </location>
</feature>
<feature type="active site" evidence="1">
    <location>
        <position position="160"/>
    </location>
</feature>
<feature type="binding site" evidence="2">
    <location>
        <position position="85"/>
    </location>
    <ligand>
        <name>S-adenosyl-L-methionine</name>
        <dbReference type="ChEBI" id="CHEBI:59789"/>
    </ligand>
</feature>
<feature type="binding site" evidence="2">
    <location>
        <position position="110"/>
    </location>
    <ligand>
        <name>S-adenosyl-L-methionine</name>
        <dbReference type="ChEBI" id="CHEBI:59789"/>
    </ligand>
</feature>
<feature type="binding site" evidence="2">
    <location>
        <position position="137"/>
    </location>
    <ligand>
        <name>S-adenosyl-L-methionine</name>
        <dbReference type="ChEBI" id="CHEBI:59789"/>
    </ligand>
</feature>
<feature type="binding site" evidence="2">
    <location>
        <position position="160"/>
    </location>
    <ligand>
        <name>S-adenosyl-L-methionine</name>
        <dbReference type="ChEBI" id="CHEBI:59789"/>
    </ligand>
</feature>
<feature type="binding site" evidence="2">
    <location>
        <position position="164"/>
    </location>
    <ligand>
        <name>substrate</name>
    </ligand>
</feature>
<feature type="binding site" evidence="2">
    <location>
        <position position="196"/>
    </location>
    <ligand>
        <name>substrate</name>
    </ligand>
</feature>
<feature type="binding site" evidence="2">
    <location>
        <begin position="280"/>
        <end position="283"/>
    </location>
    <ligand>
        <name>substrate</name>
    </ligand>
</feature>
<comment type="function">
    <text evidence="2">Catalyzes the formation of N(7)-methylguanine at position 46 (m7G46) in tRNA.</text>
</comment>
<comment type="catalytic activity">
    <reaction evidence="2">
        <text>guanosine(46) in tRNA + S-adenosyl-L-methionine = N(7)-methylguanosine(46) in tRNA + S-adenosyl-L-homocysteine</text>
        <dbReference type="Rhea" id="RHEA:42708"/>
        <dbReference type="Rhea" id="RHEA-COMP:10188"/>
        <dbReference type="Rhea" id="RHEA-COMP:10189"/>
        <dbReference type="ChEBI" id="CHEBI:57856"/>
        <dbReference type="ChEBI" id="CHEBI:59789"/>
        <dbReference type="ChEBI" id="CHEBI:74269"/>
        <dbReference type="ChEBI" id="CHEBI:74480"/>
        <dbReference type="EC" id="2.1.1.33"/>
    </reaction>
</comment>
<comment type="pathway">
    <text evidence="2">tRNA modification; N(7)-methylguanine-tRNA biosynthesis.</text>
</comment>
<comment type="similarity">
    <text evidence="2">Belongs to the class I-like SAM-binding methyltransferase superfamily. TrmB family.</text>
</comment>
<evidence type="ECO:0000250" key="1"/>
<evidence type="ECO:0000255" key="2">
    <source>
        <dbReference type="HAMAP-Rule" id="MF_01057"/>
    </source>
</evidence>
<evidence type="ECO:0000256" key="3">
    <source>
        <dbReference type="SAM" id="MobiDB-lite"/>
    </source>
</evidence>
<sequence length="301" mass="33299">MSETPDSPRPVTPGSQASFGTYGGRPVSFVRRGTRLQGRRQAAWEEHAERWAIQVPRHVANTSVHPDYTFDAEAVFGRKAPLIVEIGSGLGDAVVHAAEQNPDKDFLAVEVYTPGLANTIIKINSRGLTNVRVVEANAPEVLESMLPEGSVSELWVFFPDPWHKARHHKRRLIQPAFASVAAKALVKGGYWRIATDWSNYAVHVREVLTGSTEFENMHEGERSGEESPLTQVWQSGVESVVGGAPVREGRAPVSTEHTGPNEGVDEEGGWAPRFDGRIRTSFENKAHEAGRMIFDLTYRKR</sequence>
<gene>
    <name evidence="2" type="primary">trmB</name>
    <name type="ordered locus">AAur_3557</name>
</gene>
<reference key="1">
    <citation type="journal article" date="2006" name="PLoS Genet.">
        <title>Secrets of soil survival revealed by the genome sequence of Arthrobacter aurescens TC1.</title>
        <authorList>
            <person name="Mongodin E.F."/>
            <person name="Shapir N."/>
            <person name="Daugherty S.C."/>
            <person name="DeBoy R.T."/>
            <person name="Emerson J.B."/>
            <person name="Shvartzbeyn A."/>
            <person name="Radune D."/>
            <person name="Vamathevan J."/>
            <person name="Riggs F."/>
            <person name="Grinberg V."/>
            <person name="Khouri H.M."/>
            <person name="Wackett L.P."/>
            <person name="Nelson K.E."/>
            <person name="Sadowsky M.J."/>
        </authorList>
    </citation>
    <scope>NUCLEOTIDE SEQUENCE [LARGE SCALE GENOMIC DNA]</scope>
    <source>
        <strain>TC1</strain>
    </source>
</reference>
<organism>
    <name type="scientific">Paenarthrobacter aurescens (strain TC1)</name>
    <dbReference type="NCBI Taxonomy" id="290340"/>
    <lineage>
        <taxon>Bacteria</taxon>
        <taxon>Bacillati</taxon>
        <taxon>Actinomycetota</taxon>
        <taxon>Actinomycetes</taxon>
        <taxon>Micrococcales</taxon>
        <taxon>Micrococcaceae</taxon>
        <taxon>Paenarthrobacter</taxon>
    </lineage>
</organism>
<accession>A1RAI8</accession>
<name>TRMB_PAEAT</name>
<dbReference type="EC" id="2.1.1.33" evidence="2"/>
<dbReference type="EMBL" id="CP000474">
    <property type="protein sequence ID" value="ABM06497.1"/>
    <property type="molecule type" value="Genomic_DNA"/>
</dbReference>
<dbReference type="RefSeq" id="WP_011776176.1">
    <property type="nucleotide sequence ID" value="NC_008711.1"/>
</dbReference>
<dbReference type="SMR" id="A1RAI8"/>
<dbReference type="STRING" id="290340.AAur_3557"/>
<dbReference type="KEGG" id="aau:AAur_3557"/>
<dbReference type="eggNOG" id="COG0220">
    <property type="taxonomic scope" value="Bacteria"/>
</dbReference>
<dbReference type="HOGENOM" id="CLU_050910_0_0_11"/>
<dbReference type="OrthoDB" id="9802090at2"/>
<dbReference type="UniPathway" id="UPA00989"/>
<dbReference type="Proteomes" id="UP000000637">
    <property type="component" value="Chromosome"/>
</dbReference>
<dbReference type="GO" id="GO:0043527">
    <property type="term" value="C:tRNA methyltransferase complex"/>
    <property type="evidence" value="ECO:0007669"/>
    <property type="project" value="TreeGrafter"/>
</dbReference>
<dbReference type="GO" id="GO:0008176">
    <property type="term" value="F:tRNA (guanine(46)-N7)-methyltransferase activity"/>
    <property type="evidence" value="ECO:0007669"/>
    <property type="project" value="UniProtKB-UniRule"/>
</dbReference>
<dbReference type="Gene3D" id="3.40.50.150">
    <property type="entry name" value="Vaccinia Virus protein VP39"/>
    <property type="match status" value="1"/>
</dbReference>
<dbReference type="HAMAP" id="MF_01057">
    <property type="entry name" value="tRNA_methyltr_TrmB"/>
    <property type="match status" value="1"/>
</dbReference>
<dbReference type="InterPro" id="IPR029063">
    <property type="entry name" value="SAM-dependent_MTases_sf"/>
</dbReference>
<dbReference type="InterPro" id="IPR003358">
    <property type="entry name" value="tRNA_(Gua-N-7)_MeTrfase_Trmb"/>
</dbReference>
<dbReference type="InterPro" id="IPR055361">
    <property type="entry name" value="tRNA_methyltr_TrmB_bact"/>
</dbReference>
<dbReference type="NCBIfam" id="TIGR00091">
    <property type="entry name" value="tRNA (guanosine(46)-N7)-methyltransferase TrmB"/>
    <property type="match status" value="1"/>
</dbReference>
<dbReference type="PANTHER" id="PTHR23417">
    <property type="entry name" value="3-DEOXY-D-MANNO-OCTULOSONIC-ACID TRANSFERASE/TRNA GUANINE-N 7 - -METHYLTRANSFERASE"/>
    <property type="match status" value="1"/>
</dbReference>
<dbReference type="PANTHER" id="PTHR23417:SF14">
    <property type="entry name" value="PENTACOTRIPEPTIDE-REPEAT REGION OF PRORP DOMAIN-CONTAINING PROTEIN"/>
    <property type="match status" value="1"/>
</dbReference>
<dbReference type="Pfam" id="PF02390">
    <property type="entry name" value="Methyltransf_4"/>
    <property type="match status" value="1"/>
</dbReference>
<dbReference type="SUPFAM" id="SSF53335">
    <property type="entry name" value="S-adenosyl-L-methionine-dependent methyltransferases"/>
    <property type="match status" value="1"/>
</dbReference>
<dbReference type="PROSITE" id="PS51625">
    <property type="entry name" value="SAM_MT_TRMB"/>
    <property type="match status" value="1"/>
</dbReference>
<protein>
    <recommendedName>
        <fullName evidence="2">tRNA (guanine-N(7)-)-methyltransferase</fullName>
        <ecNumber evidence="2">2.1.1.33</ecNumber>
    </recommendedName>
    <alternativeName>
        <fullName evidence="2">tRNA (guanine(46)-N(7))-methyltransferase</fullName>
    </alternativeName>
    <alternativeName>
        <fullName evidence="2">tRNA(m7G46)-methyltransferase</fullName>
    </alternativeName>
</protein>